<comment type="function">
    <text evidence="1">Binds as a heterodimer with protein bS6 to the central domain of the 16S rRNA, where it helps stabilize the platform of the 30S subunit.</text>
</comment>
<comment type="subunit">
    <text evidence="1">Part of the 30S ribosomal subunit. Forms a tight heterodimer with protein bS6.</text>
</comment>
<comment type="similarity">
    <text evidence="1">Belongs to the bacterial ribosomal protein bS18 family.</text>
</comment>
<feature type="chain" id="PRO_0000111231" description="Small ribosomal subunit protein bS18">
    <location>
        <begin position="1"/>
        <end position="80"/>
    </location>
</feature>
<protein>
    <recommendedName>
        <fullName evidence="1">Small ribosomal subunit protein bS18</fullName>
    </recommendedName>
    <alternativeName>
        <fullName evidence="2">30S ribosomal protein S18</fullName>
    </alternativeName>
</protein>
<keyword id="KW-1185">Reference proteome</keyword>
<keyword id="KW-0687">Ribonucleoprotein</keyword>
<keyword id="KW-0689">Ribosomal protein</keyword>
<keyword id="KW-0694">RNA-binding</keyword>
<keyword id="KW-0699">rRNA-binding</keyword>
<dbReference type="EMBL" id="CP000029">
    <property type="protein sequence ID" value="AAW53431.1"/>
    <property type="molecule type" value="Genomic_DNA"/>
</dbReference>
<dbReference type="RefSeq" id="WP_001831354.1">
    <property type="nucleotide sequence ID" value="NC_002976.3"/>
</dbReference>
<dbReference type="SMR" id="Q5HRZ3"/>
<dbReference type="STRING" id="176279.SERP0046"/>
<dbReference type="GeneID" id="93670581"/>
<dbReference type="KEGG" id="ser:SERP0046"/>
<dbReference type="eggNOG" id="COG0238">
    <property type="taxonomic scope" value="Bacteria"/>
</dbReference>
<dbReference type="HOGENOM" id="CLU_148710_2_2_9"/>
<dbReference type="Proteomes" id="UP000000531">
    <property type="component" value="Chromosome"/>
</dbReference>
<dbReference type="GO" id="GO:0022627">
    <property type="term" value="C:cytosolic small ribosomal subunit"/>
    <property type="evidence" value="ECO:0007669"/>
    <property type="project" value="TreeGrafter"/>
</dbReference>
<dbReference type="GO" id="GO:0070181">
    <property type="term" value="F:small ribosomal subunit rRNA binding"/>
    <property type="evidence" value="ECO:0007669"/>
    <property type="project" value="TreeGrafter"/>
</dbReference>
<dbReference type="GO" id="GO:0003735">
    <property type="term" value="F:structural constituent of ribosome"/>
    <property type="evidence" value="ECO:0007669"/>
    <property type="project" value="InterPro"/>
</dbReference>
<dbReference type="GO" id="GO:0006412">
    <property type="term" value="P:translation"/>
    <property type="evidence" value="ECO:0007669"/>
    <property type="project" value="UniProtKB-UniRule"/>
</dbReference>
<dbReference type="FunFam" id="4.10.640.10:FF:000003">
    <property type="entry name" value="30S ribosomal protein S18"/>
    <property type="match status" value="1"/>
</dbReference>
<dbReference type="Gene3D" id="4.10.640.10">
    <property type="entry name" value="Ribosomal protein S18"/>
    <property type="match status" value="1"/>
</dbReference>
<dbReference type="HAMAP" id="MF_00270">
    <property type="entry name" value="Ribosomal_bS18"/>
    <property type="match status" value="1"/>
</dbReference>
<dbReference type="InterPro" id="IPR001648">
    <property type="entry name" value="Ribosomal_bS18"/>
</dbReference>
<dbReference type="InterPro" id="IPR018275">
    <property type="entry name" value="Ribosomal_bS18_CS"/>
</dbReference>
<dbReference type="InterPro" id="IPR036870">
    <property type="entry name" value="Ribosomal_bS18_sf"/>
</dbReference>
<dbReference type="NCBIfam" id="TIGR00165">
    <property type="entry name" value="S18"/>
    <property type="match status" value="1"/>
</dbReference>
<dbReference type="PANTHER" id="PTHR13479">
    <property type="entry name" value="30S RIBOSOMAL PROTEIN S18"/>
    <property type="match status" value="1"/>
</dbReference>
<dbReference type="PANTHER" id="PTHR13479:SF40">
    <property type="entry name" value="SMALL RIBOSOMAL SUBUNIT PROTEIN BS18M"/>
    <property type="match status" value="1"/>
</dbReference>
<dbReference type="Pfam" id="PF01084">
    <property type="entry name" value="Ribosomal_S18"/>
    <property type="match status" value="1"/>
</dbReference>
<dbReference type="PRINTS" id="PR00974">
    <property type="entry name" value="RIBOSOMALS18"/>
</dbReference>
<dbReference type="SUPFAM" id="SSF46911">
    <property type="entry name" value="Ribosomal protein S18"/>
    <property type="match status" value="1"/>
</dbReference>
<dbReference type="PROSITE" id="PS00057">
    <property type="entry name" value="RIBOSOMAL_S18"/>
    <property type="match status" value="1"/>
</dbReference>
<proteinExistence type="inferred from homology"/>
<sequence>MAGGPRRGGRRRKKVCYFTANGITHIDYKDTELLKRFISERGKILPRRVTGTSAKYQRMLTTAIKRARHMALLPYVKEEQ</sequence>
<name>RS18_STAEQ</name>
<evidence type="ECO:0000255" key="1">
    <source>
        <dbReference type="HAMAP-Rule" id="MF_00270"/>
    </source>
</evidence>
<evidence type="ECO:0000305" key="2"/>
<gene>
    <name evidence="1" type="primary">rpsR</name>
    <name type="ordered locus">SERP0046</name>
</gene>
<accession>Q5HRZ3</accession>
<organism>
    <name type="scientific">Staphylococcus epidermidis (strain ATCC 35984 / DSM 28319 / BCRC 17069 / CCUG 31568 / BM 3577 / RP62A)</name>
    <dbReference type="NCBI Taxonomy" id="176279"/>
    <lineage>
        <taxon>Bacteria</taxon>
        <taxon>Bacillati</taxon>
        <taxon>Bacillota</taxon>
        <taxon>Bacilli</taxon>
        <taxon>Bacillales</taxon>
        <taxon>Staphylococcaceae</taxon>
        <taxon>Staphylococcus</taxon>
    </lineage>
</organism>
<reference key="1">
    <citation type="journal article" date="2005" name="J. Bacteriol.">
        <title>Insights on evolution of virulence and resistance from the complete genome analysis of an early methicillin-resistant Staphylococcus aureus strain and a biofilm-producing methicillin-resistant Staphylococcus epidermidis strain.</title>
        <authorList>
            <person name="Gill S.R."/>
            <person name="Fouts D.E."/>
            <person name="Archer G.L."/>
            <person name="Mongodin E.F."/>
            <person name="DeBoy R.T."/>
            <person name="Ravel J."/>
            <person name="Paulsen I.T."/>
            <person name="Kolonay J.F."/>
            <person name="Brinkac L.M."/>
            <person name="Beanan M.J."/>
            <person name="Dodson R.J."/>
            <person name="Daugherty S.C."/>
            <person name="Madupu R."/>
            <person name="Angiuoli S.V."/>
            <person name="Durkin A.S."/>
            <person name="Haft D.H."/>
            <person name="Vamathevan J.J."/>
            <person name="Khouri H."/>
            <person name="Utterback T.R."/>
            <person name="Lee C."/>
            <person name="Dimitrov G."/>
            <person name="Jiang L."/>
            <person name="Qin H."/>
            <person name="Weidman J."/>
            <person name="Tran K."/>
            <person name="Kang K.H."/>
            <person name="Hance I.R."/>
            <person name="Nelson K.E."/>
            <person name="Fraser C.M."/>
        </authorList>
    </citation>
    <scope>NUCLEOTIDE SEQUENCE [LARGE SCALE GENOMIC DNA]</scope>
    <source>
        <strain>ATCC 35984 / DSM 28319 / BCRC 17069 / CCUG 31568 / BM 3577 / RP62A</strain>
    </source>
</reference>